<reference key="1">
    <citation type="journal article" date="2008" name="Free Radic. Biol. Med.">
        <title>Identification and characterization of VPO1, a new animal heme-containing peroxidase.</title>
        <authorList>
            <person name="Cheng G."/>
            <person name="Salerno J.C."/>
            <person name="Cao Z."/>
            <person name="Pagano P.J."/>
            <person name="Lambeth J.D."/>
        </authorList>
    </citation>
    <scope>NUCLEOTIDE SEQUENCE [MRNA] (ISOFORM 1)</scope>
    <scope>VARIANT VAL-981</scope>
</reference>
<reference key="2">
    <citation type="submission" date="2005-01" db="EMBL/GenBank/DDBJ databases">
        <title>Identification of a novel peroxidase in heart.</title>
        <authorList>
            <person name="Sum A."/>
            <person name="Peterfi Z."/>
            <person name="Geiszt M."/>
        </authorList>
    </citation>
    <scope>NUCLEOTIDE SEQUENCE [MRNA] (ISOFORM 1)</scope>
    <scope>VARIANTS VAL-981; LYS-1399 AND GLU-1452</scope>
    <source>
        <tissue>Heart</tissue>
    </source>
</reference>
<reference key="3">
    <citation type="journal article" date="2006" name="Nature">
        <title>DNA sequence and analysis of human chromosome 8.</title>
        <authorList>
            <person name="Nusbaum C."/>
            <person name="Mikkelsen T.S."/>
            <person name="Zody M.C."/>
            <person name="Asakawa S."/>
            <person name="Taudien S."/>
            <person name="Garber M."/>
            <person name="Kodira C.D."/>
            <person name="Schueler M.G."/>
            <person name="Shimizu A."/>
            <person name="Whittaker C.A."/>
            <person name="Chang J.L."/>
            <person name="Cuomo C.A."/>
            <person name="Dewar K."/>
            <person name="FitzGerald M.G."/>
            <person name="Yang X."/>
            <person name="Allen N.R."/>
            <person name="Anderson S."/>
            <person name="Asakawa T."/>
            <person name="Blechschmidt K."/>
            <person name="Bloom T."/>
            <person name="Borowsky M.L."/>
            <person name="Butler J."/>
            <person name="Cook A."/>
            <person name="Corum B."/>
            <person name="DeArellano K."/>
            <person name="DeCaprio D."/>
            <person name="Dooley K.T."/>
            <person name="Dorris L. III"/>
            <person name="Engels R."/>
            <person name="Gloeckner G."/>
            <person name="Hafez N."/>
            <person name="Hagopian D.S."/>
            <person name="Hall J.L."/>
            <person name="Ishikawa S.K."/>
            <person name="Jaffe D.B."/>
            <person name="Kamat A."/>
            <person name="Kudoh J."/>
            <person name="Lehmann R."/>
            <person name="Lokitsang T."/>
            <person name="Macdonald P."/>
            <person name="Major J.E."/>
            <person name="Matthews C.D."/>
            <person name="Mauceli E."/>
            <person name="Menzel U."/>
            <person name="Mihalev A.H."/>
            <person name="Minoshima S."/>
            <person name="Murayama Y."/>
            <person name="Naylor J.W."/>
            <person name="Nicol R."/>
            <person name="Nguyen C."/>
            <person name="O'Leary S.B."/>
            <person name="O'Neill K."/>
            <person name="Parker S.C.J."/>
            <person name="Polley A."/>
            <person name="Raymond C.K."/>
            <person name="Reichwald K."/>
            <person name="Rodriguez J."/>
            <person name="Sasaki T."/>
            <person name="Schilhabel M."/>
            <person name="Siddiqui R."/>
            <person name="Smith C.L."/>
            <person name="Sneddon T.P."/>
            <person name="Talamas J.A."/>
            <person name="Tenzin P."/>
            <person name="Topham K."/>
            <person name="Venkataraman V."/>
            <person name="Wen G."/>
            <person name="Yamazaki S."/>
            <person name="Young S.K."/>
            <person name="Zeng Q."/>
            <person name="Zimmer A.R."/>
            <person name="Rosenthal A."/>
            <person name="Birren B.W."/>
            <person name="Platzer M."/>
            <person name="Shimizu N."/>
            <person name="Lander E.S."/>
        </authorList>
    </citation>
    <scope>NUCLEOTIDE SEQUENCE [LARGE SCALE GENOMIC DNA]</scope>
</reference>
<reference key="4">
    <citation type="journal article" date="2004" name="Nat. Genet.">
        <title>Complete sequencing and characterization of 21,243 full-length human cDNAs.</title>
        <authorList>
            <person name="Ota T."/>
            <person name="Suzuki Y."/>
            <person name="Nishikawa T."/>
            <person name="Otsuki T."/>
            <person name="Sugiyama T."/>
            <person name="Irie R."/>
            <person name="Wakamatsu A."/>
            <person name="Hayashi K."/>
            <person name="Sato H."/>
            <person name="Nagai K."/>
            <person name="Kimura K."/>
            <person name="Makita H."/>
            <person name="Sekine M."/>
            <person name="Obayashi M."/>
            <person name="Nishi T."/>
            <person name="Shibahara T."/>
            <person name="Tanaka T."/>
            <person name="Ishii S."/>
            <person name="Yamamoto J."/>
            <person name="Saito K."/>
            <person name="Kawai Y."/>
            <person name="Isono Y."/>
            <person name="Nakamura Y."/>
            <person name="Nagahari K."/>
            <person name="Murakami K."/>
            <person name="Yasuda T."/>
            <person name="Iwayanagi T."/>
            <person name="Wagatsuma M."/>
            <person name="Shiratori A."/>
            <person name="Sudo H."/>
            <person name="Hosoiri T."/>
            <person name="Kaku Y."/>
            <person name="Kodaira H."/>
            <person name="Kondo H."/>
            <person name="Sugawara M."/>
            <person name="Takahashi M."/>
            <person name="Kanda K."/>
            <person name="Yokoi T."/>
            <person name="Furuya T."/>
            <person name="Kikkawa E."/>
            <person name="Omura Y."/>
            <person name="Abe K."/>
            <person name="Kamihara K."/>
            <person name="Katsuta N."/>
            <person name="Sato K."/>
            <person name="Tanikawa M."/>
            <person name="Yamazaki M."/>
            <person name="Ninomiya K."/>
            <person name="Ishibashi T."/>
            <person name="Yamashita H."/>
            <person name="Murakawa K."/>
            <person name="Fujimori K."/>
            <person name="Tanai H."/>
            <person name="Kimata M."/>
            <person name="Watanabe M."/>
            <person name="Hiraoka S."/>
            <person name="Chiba Y."/>
            <person name="Ishida S."/>
            <person name="Ono Y."/>
            <person name="Takiguchi S."/>
            <person name="Watanabe S."/>
            <person name="Yosida M."/>
            <person name="Hotuta T."/>
            <person name="Kusano J."/>
            <person name="Kanehori K."/>
            <person name="Takahashi-Fujii A."/>
            <person name="Hara H."/>
            <person name="Tanase T.-O."/>
            <person name="Nomura Y."/>
            <person name="Togiya S."/>
            <person name="Komai F."/>
            <person name="Hara R."/>
            <person name="Takeuchi K."/>
            <person name="Arita M."/>
            <person name="Imose N."/>
            <person name="Musashino K."/>
            <person name="Yuuki H."/>
            <person name="Oshima A."/>
            <person name="Sasaki N."/>
            <person name="Aotsuka S."/>
            <person name="Yoshikawa Y."/>
            <person name="Matsunawa H."/>
            <person name="Ichihara T."/>
            <person name="Shiohata N."/>
            <person name="Sano S."/>
            <person name="Moriya S."/>
            <person name="Momiyama H."/>
            <person name="Satoh N."/>
            <person name="Takami S."/>
            <person name="Terashima Y."/>
            <person name="Suzuki O."/>
            <person name="Nakagawa S."/>
            <person name="Senoh A."/>
            <person name="Mizoguchi H."/>
            <person name="Goto Y."/>
            <person name="Shimizu F."/>
            <person name="Wakebe H."/>
            <person name="Hishigaki H."/>
            <person name="Watanabe T."/>
            <person name="Sugiyama A."/>
            <person name="Takemoto M."/>
            <person name="Kawakami B."/>
            <person name="Yamazaki M."/>
            <person name="Watanabe K."/>
            <person name="Kumagai A."/>
            <person name="Itakura S."/>
            <person name="Fukuzumi Y."/>
            <person name="Fujimori Y."/>
            <person name="Komiyama M."/>
            <person name="Tashiro H."/>
            <person name="Tanigami A."/>
            <person name="Fujiwara T."/>
            <person name="Ono T."/>
            <person name="Yamada K."/>
            <person name="Fujii Y."/>
            <person name="Ozaki K."/>
            <person name="Hirao M."/>
            <person name="Ohmori Y."/>
            <person name="Kawabata A."/>
            <person name="Hikiji T."/>
            <person name="Kobatake N."/>
            <person name="Inagaki H."/>
            <person name="Ikema Y."/>
            <person name="Okamoto S."/>
            <person name="Okitani R."/>
            <person name="Kawakami T."/>
            <person name="Noguchi S."/>
            <person name="Itoh T."/>
            <person name="Shigeta K."/>
            <person name="Senba T."/>
            <person name="Matsumura K."/>
            <person name="Nakajima Y."/>
            <person name="Mizuno T."/>
            <person name="Morinaga M."/>
            <person name="Sasaki M."/>
            <person name="Togashi T."/>
            <person name="Oyama M."/>
            <person name="Hata H."/>
            <person name="Watanabe M."/>
            <person name="Komatsu T."/>
            <person name="Mizushima-Sugano J."/>
            <person name="Satoh T."/>
            <person name="Shirai Y."/>
            <person name="Takahashi Y."/>
            <person name="Nakagawa K."/>
            <person name="Okumura K."/>
            <person name="Nagase T."/>
            <person name="Nomura N."/>
            <person name="Kikuchi H."/>
            <person name="Masuho Y."/>
            <person name="Yamashita R."/>
            <person name="Nakai K."/>
            <person name="Yada T."/>
            <person name="Nakamura Y."/>
            <person name="Ohara O."/>
            <person name="Isogai T."/>
            <person name="Sugano S."/>
        </authorList>
    </citation>
    <scope>NUCLEOTIDE SEQUENCE [LARGE SCALE MRNA] OF 735-1463 (ISOFORM 2)</scope>
    <scope>NUCLEOTIDE SEQUENCE [LARGE SCALE MRNA] OF 894-1463 (ISOFORM 1)</scope>
    <scope>VARIANT VAL-981</scope>
    <source>
        <tissue>Pericardium</tissue>
        <tissue>Testis</tissue>
    </source>
</reference>
<reference key="5">
    <citation type="submission" date="2005-07" db="EMBL/GenBank/DDBJ databases">
        <authorList>
            <person name="Mural R.J."/>
            <person name="Istrail S."/>
            <person name="Sutton G.G."/>
            <person name="Florea L."/>
            <person name="Halpern A.L."/>
            <person name="Mobarry C.M."/>
            <person name="Lippert R."/>
            <person name="Walenz B."/>
            <person name="Shatkay H."/>
            <person name="Dew I."/>
            <person name="Miller J.R."/>
            <person name="Flanigan M.J."/>
            <person name="Edwards N.J."/>
            <person name="Bolanos R."/>
            <person name="Fasulo D."/>
            <person name="Halldorsson B.V."/>
            <person name="Hannenhalli S."/>
            <person name="Turner R."/>
            <person name="Yooseph S."/>
            <person name="Lu F."/>
            <person name="Nusskern D.R."/>
            <person name="Shue B.C."/>
            <person name="Zheng X.H."/>
            <person name="Zhong F."/>
            <person name="Delcher A.L."/>
            <person name="Huson D.H."/>
            <person name="Kravitz S.A."/>
            <person name="Mouchard L."/>
            <person name="Reinert K."/>
            <person name="Remington K.A."/>
            <person name="Clark A.G."/>
            <person name="Waterman M.S."/>
            <person name="Eichler E.E."/>
            <person name="Adams M.D."/>
            <person name="Hunkapiller M.W."/>
            <person name="Myers E.W."/>
            <person name="Venter J.C."/>
        </authorList>
    </citation>
    <scope>NUCLEOTIDE SEQUENCE [LARGE SCALE GENOMIC DNA] OF 752-1463</scope>
    <scope>VARIANT VAL-981</scope>
</reference>
<reference key="6">
    <citation type="journal article" date="2003" name="RNA">
        <title>An endonuclease activity similar to Xenopus PMR1 catalyzes the degradation of normal and nonsense-containing human beta-globin mRNA in erythroid cells.</title>
        <authorList>
            <person name="Bremer K.A."/>
            <person name="Stevens A."/>
            <person name="Schoenberg D.R."/>
        </authorList>
    </citation>
    <scope>FUNCTION (ISOFORM PMR1)</scope>
    <scope>SUBCELLULAR LOCATION</scope>
</reference>
<reference key="7">
    <citation type="journal article" date="2012" name="RNA">
        <title>Identification of the human PMR1 mRNA endonuclease as an alternatively processed product of the gene for peroxidasin-like protein.</title>
        <authorList>
            <person name="Gu S.Q."/>
            <person name="Bakthavachalu B."/>
            <person name="Han J."/>
            <person name="Patil D.P."/>
            <person name="Otsuka Y."/>
            <person name="Guda C."/>
            <person name="Schoenberg D.R."/>
        </authorList>
    </citation>
    <scope>ALTERNATIVE SPLICING (ISOFORM PMR1)</scope>
    <scope>FUNCTION</scope>
    <scope>TISSUE SPECIFICITY</scope>
    <scope>PHOSPHORYLATION</scope>
    <scope>INTERACTION WITH SRC</scope>
</reference>
<reference key="8">
    <citation type="journal article" date="2014" name="Cardiovasc. Res.">
        <title>Peroxidasin-like protein: a novel peroxidase homologue in the human heart.</title>
        <authorList>
            <person name="Peterfi Z."/>
            <person name="Toth Z.E."/>
            <person name="Kovacs H.A."/>
            <person name="Lazar E."/>
            <person name="Sum A."/>
            <person name="Donko A."/>
            <person name="Sirokmany G."/>
            <person name="Shah A.M."/>
            <person name="Geiszt M."/>
        </authorList>
    </citation>
    <scope>FUNCTION</scope>
    <scope>TISSUE SPECIFICITY</scope>
    <scope>SUBCELLULAR LOCATION</scope>
    <scope>INTERACTION WITH PXDN</scope>
    <scope>INDUCTION</scope>
</reference>
<sequence length="1463" mass="163686">MEPRLFCWTTLFLLAGWCLPGLPCPSRCLCFKSTVRCMHLMLDHIPQVPQQTTVLDLRFNRIREIPGSAFKKLKNLNTLLLNNNHIRKISRNAFEGLENLLYLYLYKNEIHALDKQTFKGLISLEHLYIHFNQLEMLQPETFGDLLRLERLFLHNNKLSKIPAGSFSNLDSLKRLRLDSNALVCDCDLMWLGELLQGFAQHGHTQAAATCEYPRRLHGRAVASVTVEEFNCQSPRITFEPQDVEVPSGNTVYFTCRAEGNPKPEIIWIHNNHSLDLEDDTRLNVFDDGTLMIRNTRESDQGVYQCMARNSAGEAKTQSAMLRYSSLPAKPSFVIQPQDTEVLIGTSTTLECMATGHPHPLITWTRDNGLELDGSRHVATSSGLYLQNITQRDHGRFTCHANNSHGTVQAAANIIVQAPPQFTVTPKDQVVLEEHAVEWLCEADGNPPPVIVWTKTGGQLPVEGQHTVLSSGTLRIDRAAQHDQGQYECQAVSSLGVKKVSVQLTVKPKALAVFTQLPQDTSVEVGKNINISCHAQGEPQPIITWNKEGVQITESGKFHVDDEGTLTIYDAGFPDQGRYECVARNSFGLAVTNMFLTVTAIQGRQAGDDFVESSILDAVQRVDSAINSTRRHLFSQKPHTSSDLLAQFHYPRDPLIVEMARAGEIFEHTLQLIRERVKQGLTVDLEGKEFRYNDLVSPRSLSLIANLSGCTARRPLPNCSNRCFHAKYRAHDGTCNNLQQPTWGAALTAFARLLQPAYRDGIRAPRGLGLPVGSRQPLPPPRLVATVWARAAAVTPDHSYTRMLMHWGWFLEHDLDHTVPALSTARFSDGRPCSSVCTNDPPCFPMNTRHADPRGTHAPCMLFARSSPACASGRPSATVDSVYAREQINQQTAYIDGSNVYGSSERESQALRDPSVPRGLLKTGFPWPPSGKPLLPFSTGPPTECARQEQESPCFLAGDHRANEHLALAAMHTLWFREHNRMATELSALNPHWEGNTVYQEARKIVGAELQHITYSHWLPKVLGDPGTRMLRGYRGYNPNVNAGIINSFATAAFRFGHTLINPILYRLNATLGEISEGHLPFHKALFSPSRIIKEGGIDPVLRGLFGVAAKWRAPSYLLSPELTQRLFSAAYSAAVDSAATIIQRGRDHGIPPYVDFRVFCNLTSVKNFEDLQNEIKDSEIRQKLRKLYGSPGDIDLWPALMVEDLIPGTRVGPTLMCLFVTQFQRLRDGDRFWYENPGVFTPAQLTQLKQASLSRVLCDNGDSIQQVQADVFVKAEYPQDYLNCSEIPKVDLRVWQDCCADCRSRGQFRAVTQESQKKRSAQYSYPVDKDMELSHLRSRQQDKIYVGEDARNVTVLAKTKFSQDFSTFAAEIQETITALREQINKLEARLRQAGCTDVRGVPRKAEERWMKEDCTHCICESGQVTCVVEICPPAPCPSPELVKGTCCPVCRDRGMPSDSPEKR</sequence>
<gene>
    <name evidence="14" type="primary">PXDNL</name>
    <name type="synonym">VPO2</name>
</gene>
<dbReference type="EC" id="1.-.-.-" evidence="13"/>
<dbReference type="EMBL" id="EU170240">
    <property type="protein sequence ID" value="ABX24517.1"/>
    <property type="molecule type" value="mRNA"/>
</dbReference>
<dbReference type="EMBL" id="AY877349">
    <property type="protein sequence ID" value="AAX70929.1"/>
    <property type="status" value="ALT_FRAME"/>
    <property type="molecule type" value="mRNA"/>
</dbReference>
<dbReference type="EMBL" id="AC090186">
    <property type="status" value="NOT_ANNOTATED_CDS"/>
    <property type="molecule type" value="Genomic_DNA"/>
</dbReference>
<dbReference type="EMBL" id="AC103958">
    <property type="status" value="NOT_ANNOTATED_CDS"/>
    <property type="molecule type" value="Genomic_DNA"/>
</dbReference>
<dbReference type="EMBL" id="AC107374">
    <property type="status" value="NOT_ANNOTATED_CDS"/>
    <property type="molecule type" value="Genomic_DNA"/>
</dbReference>
<dbReference type="EMBL" id="AC011128">
    <property type="status" value="NOT_ANNOTATED_CDS"/>
    <property type="molecule type" value="Genomic_DNA"/>
</dbReference>
<dbReference type="EMBL" id="AC012413">
    <property type="status" value="NOT_ANNOTATED_CDS"/>
    <property type="molecule type" value="Genomic_DNA"/>
</dbReference>
<dbReference type="EMBL" id="AK058200">
    <property type="protein sequence ID" value="BAB71713.1"/>
    <property type="status" value="ALT_INIT"/>
    <property type="molecule type" value="mRNA"/>
</dbReference>
<dbReference type="EMBL" id="AK131524">
    <property type="protein sequence ID" value="BAD18663.1"/>
    <property type="status" value="ALT_INIT"/>
    <property type="molecule type" value="mRNA"/>
</dbReference>
<dbReference type="EMBL" id="CH471068">
    <property type="protein sequence ID" value="EAW86707.1"/>
    <property type="status" value="ALT_SEQ"/>
    <property type="molecule type" value="Genomic_DNA"/>
</dbReference>
<dbReference type="CCDS" id="CCDS47855.1">
    <molecule id="A1KZ92-1"/>
</dbReference>
<dbReference type="RefSeq" id="NP_653252.3">
    <molecule id="A1KZ92-1"/>
    <property type="nucleotide sequence ID" value="NM_144651.4"/>
</dbReference>
<dbReference type="SMR" id="A1KZ92"/>
<dbReference type="BioGRID" id="126492">
    <property type="interactions" value="23"/>
</dbReference>
<dbReference type="FunCoup" id="A1KZ92">
    <property type="interactions" value="64"/>
</dbReference>
<dbReference type="IntAct" id="A1KZ92">
    <property type="interactions" value="13"/>
</dbReference>
<dbReference type="STRING" id="9606.ENSP00000348645"/>
<dbReference type="PeroxiBase" id="5398">
    <property type="entry name" value="HsPxd02"/>
</dbReference>
<dbReference type="PeroxiBase" id="5827">
    <property type="entry name" value="HsPxd03"/>
</dbReference>
<dbReference type="GlyCosmos" id="A1KZ92">
    <property type="glycosylation" value="1 site, No reported glycans"/>
</dbReference>
<dbReference type="GlyGen" id="A1KZ92">
    <property type="glycosylation" value="1 site"/>
</dbReference>
<dbReference type="iPTMnet" id="A1KZ92"/>
<dbReference type="PhosphoSitePlus" id="A1KZ92"/>
<dbReference type="BioMuta" id="PXDNL"/>
<dbReference type="jPOST" id="A1KZ92"/>
<dbReference type="MassIVE" id="A1KZ92"/>
<dbReference type="PaxDb" id="9606-ENSP00000348645"/>
<dbReference type="PeptideAtlas" id="A1KZ92"/>
<dbReference type="ProteomicsDB" id="126">
    <molecule id="A1KZ92-1"/>
</dbReference>
<dbReference type="ProteomicsDB" id="127">
    <molecule id="A1KZ92-2"/>
</dbReference>
<dbReference type="ProteomicsDB" id="36775"/>
<dbReference type="DNASU" id="137902"/>
<dbReference type="Ensembl" id="ENST00000356297.5">
    <molecule id="A1KZ92-1"/>
    <property type="protein sequence ID" value="ENSP00000348645.4"/>
    <property type="gene ID" value="ENSG00000147485.13"/>
</dbReference>
<dbReference type="GeneID" id="137902"/>
<dbReference type="KEGG" id="hsa:137902"/>
<dbReference type="MANE-Select" id="ENST00000356297.5">
    <property type="protein sequence ID" value="ENSP00000348645.4"/>
    <property type="RefSeq nucleotide sequence ID" value="NM_144651.5"/>
    <property type="RefSeq protein sequence ID" value="NP_653252.4"/>
</dbReference>
<dbReference type="UCSC" id="uc003xqu.5">
    <molecule id="A1KZ92-1"/>
    <property type="organism name" value="human"/>
</dbReference>
<dbReference type="AGR" id="HGNC:26359"/>
<dbReference type="CTD" id="137902"/>
<dbReference type="DisGeNET" id="137902"/>
<dbReference type="GeneCards" id="PXDNL"/>
<dbReference type="HGNC" id="HGNC:26359">
    <property type="gene designation" value="PXDNL"/>
</dbReference>
<dbReference type="HPA" id="ENSG00000147485">
    <property type="expression patterns" value="Tissue enriched (heart)"/>
</dbReference>
<dbReference type="neXtProt" id="NX_A1KZ92"/>
<dbReference type="OpenTargets" id="ENSG00000147485"/>
<dbReference type="PharmGKB" id="PA142671110"/>
<dbReference type="VEuPathDB" id="HostDB:ENSG00000147485"/>
<dbReference type="eggNOG" id="KOG2408">
    <property type="taxonomic scope" value="Eukaryota"/>
</dbReference>
<dbReference type="GeneTree" id="ENSGT00940000163562"/>
<dbReference type="HOGENOM" id="CLU_006087_0_1_1"/>
<dbReference type="InParanoid" id="A1KZ92"/>
<dbReference type="OMA" id="RYDCVAR"/>
<dbReference type="OrthoDB" id="823504at2759"/>
<dbReference type="PAN-GO" id="A1KZ92">
    <property type="GO annotations" value="2 GO annotations based on evolutionary models"/>
</dbReference>
<dbReference type="PhylomeDB" id="A1KZ92"/>
<dbReference type="TreeFam" id="TF314316"/>
<dbReference type="BRENDA" id="1.11.1.7">
    <property type="organism ID" value="2681"/>
</dbReference>
<dbReference type="PathwayCommons" id="A1KZ92"/>
<dbReference type="SignaLink" id="A1KZ92"/>
<dbReference type="BioGRID-ORCS" id="137902">
    <property type="hits" value="11 hits in 1144 CRISPR screens"/>
</dbReference>
<dbReference type="CD-CODE" id="DEE660B4">
    <property type="entry name" value="Stress granule"/>
</dbReference>
<dbReference type="ChiTaRS" id="PXDNL">
    <property type="organism name" value="human"/>
</dbReference>
<dbReference type="GenomeRNAi" id="137902"/>
<dbReference type="Pharos" id="A1KZ92">
    <property type="development level" value="Tbio"/>
</dbReference>
<dbReference type="PRO" id="PR:A1KZ92"/>
<dbReference type="Proteomes" id="UP000005640">
    <property type="component" value="Chromosome 8"/>
</dbReference>
<dbReference type="RNAct" id="A1KZ92">
    <property type="molecule type" value="protein"/>
</dbReference>
<dbReference type="Bgee" id="ENSG00000147485">
    <property type="expression patterns" value="Expressed in cardiac muscle of right atrium and 96 other cell types or tissues"/>
</dbReference>
<dbReference type="ExpressionAtlas" id="A1KZ92">
    <property type="expression patterns" value="baseline and differential"/>
</dbReference>
<dbReference type="GO" id="GO:0005783">
    <property type="term" value="C:endoplasmic reticulum"/>
    <property type="evidence" value="ECO:0007669"/>
    <property type="project" value="UniProtKB-SubCell"/>
</dbReference>
<dbReference type="GO" id="GO:0005615">
    <property type="term" value="C:extracellular space"/>
    <property type="evidence" value="ECO:0000250"/>
    <property type="project" value="UniProtKB"/>
</dbReference>
<dbReference type="GO" id="GO:0005886">
    <property type="term" value="C:plasma membrane"/>
    <property type="evidence" value="ECO:0007669"/>
    <property type="project" value="UniProtKB-SubCell"/>
</dbReference>
<dbReference type="GO" id="GO:0004519">
    <property type="term" value="F:endonuclease activity"/>
    <property type="evidence" value="ECO:0007669"/>
    <property type="project" value="UniProtKB-KW"/>
</dbReference>
<dbReference type="GO" id="GO:0020037">
    <property type="term" value="F:heme binding"/>
    <property type="evidence" value="ECO:0000250"/>
    <property type="project" value="UniProtKB"/>
</dbReference>
<dbReference type="GO" id="GO:0140825">
    <property type="term" value="F:lactoperoxidase activity"/>
    <property type="evidence" value="ECO:0007669"/>
    <property type="project" value="UniProtKB-EC"/>
</dbReference>
<dbReference type="GO" id="GO:0046872">
    <property type="term" value="F:metal ion binding"/>
    <property type="evidence" value="ECO:0007669"/>
    <property type="project" value="UniProtKB-KW"/>
</dbReference>
<dbReference type="GO" id="GO:0004601">
    <property type="term" value="F:peroxidase activity"/>
    <property type="evidence" value="ECO:0000250"/>
    <property type="project" value="UniProtKB"/>
</dbReference>
<dbReference type="GO" id="GO:0042744">
    <property type="term" value="P:hydrogen peroxide catabolic process"/>
    <property type="evidence" value="ECO:0000250"/>
    <property type="project" value="UniProtKB"/>
</dbReference>
<dbReference type="GO" id="GO:0006979">
    <property type="term" value="P:response to oxidative stress"/>
    <property type="evidence" value="ECO:0007669"/>
    <property type="project" value="InterPro"/>
</dbReference>
<dbReference type="CDD" id="cd09826">
    <property type="entry name" value="peroxidasin_like"/>
    <property type="match status" value="1"/>
</dbReference>
<dbReference type="FunFam" id="1.10.640.10:FF:000001">
    <property type="entry name" value="Peroxidasin homolog"/>
    <property type="match status" value="1"/>
</dbReference>
<dbReference type="FunFam" id="2.60.40.10:FF:000163">
    <property type="entry name" value="peroxidasin homolog"/>
    <property type="match status" value="1"/>
</dbReference>
<dbReference type="FunFam" id="2.60.40.10:FF:000248">
    <property type="entry name" value="peroxidasin homolog"/>
    <property type="match status" value="1"/>
</dbReference>
<dbReference type="FunFam" id="2.60.40.10:FF:000276">
    <property type="entry name" value="peroxidasin homolog"/>
    <property type="match status" value="1"/>
</dbReference>
<dbReference type="FunFam" id="2.60.40.10:FF:000282">
    <property type="entry name" value="peroxidasin homolog"/>
    <property type="match status" value="1"/>
</dbReference>
<dbReference type="FunFam" id="3.80.10.10:FF:000071">
    <property type="entry name" value="peroxidasin homolog"/>
    <property type="match status" value="1"/>
</dbReference>
<dbReference type="Gene3D" id="6.20.200.20">
    <property type="match status" value="1"/>
</dbReference>
<dbReference type="Gene3D" id="1.10.640.10">
    <property type="entry name" value="Haem peroxidase domain superfamily, animal type"/>
    <property type="match status" value="1"/>
</dbReference>
<dbReference type="Gene3D" id="2.60.40.10">
    <property type="entry name" value="Immunoglobulins"/>
    <property type="match status" value="4"/>
</dbReference>
<dbReference type="Gene3D" id="3.80.10.10">
    <property type="entry name" value="Ribonuclease Inhibitor"/>
    <property type="match status" value="1"/>
</dbReference>
<dbReference type="InterPro" id="IPR000483">
    <property type="entry name" value="Cys-rich_flank_reg_C"/>
</dbReference>
<dbReference type="InterPro" id="IPR019791">
    <property type="entry name" value="Haem_peroxidase_animal"/>
</dbReference>
<dbReference type="InterPro" id="IPR010255">
    <property type="entry name" value="Haem_peroxidase_sf"/>
</dbReference>
<dbReference type="InterPro" id="IPR037120">
    <property type="entry name" value="Haem_peroxidase_sf_animal"/>
</dbReference>
<dbReference type="InterPro" id="IPR007110">
    <property type="entry name" value="Ig-like_dom"/>
</dbReference>
<dbReference type="InterPro" id="IPR036179">
    <property type="entry name" value="Ig-like_dom_sf"/>
</dbReference>
<dbReference type="InterPro" id="IPR013783">
    <property type="entry name" value="Ig-like_fold"/>
</dbReference>
<dbReference type="InterPro" id="IPR013098">
    <property type="entry name" value="Ig_I-set"/>
</dbReference>
<dbReference type="InterPro" id="IPR003599">
    <property type="entry name" value="Ig_sub"/>
</dbReference>
<dbReference type="InterPro" id="IPR003598">
    <property type="entry name" value="Ig_sub2"/>
</dbReference>
<dbReference type="InterPro" id="IPR001611">
    <property type="entry name" value="Leu-rich_rpt"/>
</dbReference>
<dbReference type="InterPro" id="IPR003591">
    <property type="entry name" value="Leu-rich_rpt_typical-subtyp"/>
</dbReference>
<dbReference type="InterPro" id="IPR032675">
    <property type="entry name" value="LRR_dom_sf"/>
</dbReference>
<dbReference type="InterPro" id="IPR034824">
    <property type="entry name" value="Peroxidasin_peroxidase"/>
</dbReference>
<dbReference type="InterPro" id="IPR001007">
    <property type="entry name" value="VWF_dom"/>
</dbReference>
<dbReference type="PANTHER" id="PTHR11475">
    <property type="entry name" value="OXIDASE/PEROXIDASE"/>
    <property type="match status" value="1"/>
</dbReference>
<dbReference type="PANTHER" id="PTHR11475:SF38">
    <property type="entry name" value="OXIDOREDUCTASE PXDNL-RELATED"/>
    <property type="match status" value="1"/>
</dbReference>
<dbReference type="Pfam" id="PF03098">
    <property type="entry name" value="An_peroxidase"/>
    <property type="match status" value="1"/>
</dbReference>
<dbReference type="Pfam" id="PF07679">
    <property type="entry name" value="I-set"/>
    <property type="match status" value="3"/>
</dbReference>
<dbReference type="Pfam" id="PF13927">
    <property type="entry name" value="Ig_3"/>
    <property type="match status" value="1"/>
</dbReference>
<dbReference type="Pfam" id="PF13855">
    <property type="entry name" value="LRR_8"/>
    <property type="match status" value="2"/>
</dbReference>
<dbReference type="Pfam" id="PF00093">
    <property type="entry name" value="VWC"/>
    <property type="match status" value="1"/>
</dbReference>
<dbReference type="PRINTS" id="PR00457">
    <property type="entry name" value="ANPEROXIDASE"/>
</dbReference>
<dbReference type="SMART" id="SM00409">
    <property type="entry name" value="IG"/>
    <property type="match status" value="4"/>
</dbReference>
<dbReference type="SMART" id="SM00408">
    <property type="entry name" value="IGc2"/>
    <property type="match status" value="4"/>
</dbReference>
<dbReference type="SMART" id="SM00369">
    <property type="entry name" value="LRR_TYP"/>
    <property type="match status" value="6"/>
</dbReference>
<dbReference type="SMART" id="SM00082">
    <property type="entry name" value="LRRCT"/>
    <property type="match status" value="1"/>
</dbReference>
<dbReference type="SMART" id="SM00214">
    <property type="entry name" value="VWC"/>
    <property type="match status" value="1"/>
</dbReference>
<dbReference type="SUPFAM" id="SSF57603">
    <property type="entry name" value="FnI-like domain"/>
    <property type="match status" value="1"/>
</dbReference>
<dbReference type="SUPFAM" id="SSF48113">
    <property type="entry name" value="Heme-dependent peroxidases"/>
    <property type="match status" value="1"/>
</dbReference>
<dbReference type="SUPFAM" id="SSF48726">
    <property type="entry name" value="Immunoglobulin"/>
    <property type="match status" value="4"/>
</dbReference>
<dbReference type="SUPFAM" id="SSF52058">
    <property type="entry name" value="L domain-like"/>
    <property type="match status" value="1"/>
</dbReference>
<dbReference type="PROSITE" id="PS50835">
    <property type="entry name" value="IG_LIKE"/>
    <property type="match status" value="4"/>
</dbReference>
<dbReference type="PROSITE" id="PS51450">
    <property type="entry name" value="LRR"/>
    <property type="match status" value="6"/>
</dbReference>
<dbReference type="PROSITE" id="PS50292">
    <property type="entry name" value="PEROXIDASE_3"/>
    <property type="match status" value="1"/>
</dbReference>
<dbReference type="PROSITE" id="PS01208">
    <property type="entry name" value="VWFC_1"/>
    <property type="match status" value="1"/>
</dbReference>
<dbReference type="PROSITE" id="PS50184">
    <property type="entry name" value="VWFC_2"/>
    <property type="match status" value="1"/>
</dbReference>
<organism>
    <name type="scientific">Homo sapiens</name>
    <name type="common">Human</name>
    <dbReference type="NCBI Taxonomy" id="9606"/>
    <lineage>
        <taxon>Eukaryota</taxon>
        <taxon>Metazoa</taxon>
        <taxon>Chordata</taxon>
        <taxon>Craniata</taxon>
        <taxon>Vertebrata</taxon>
        <taxon>Euteleostomi</taxon>
        <taxon>Mammalia</taxon>
        <taxon>Eutheria</taxon>
        <taxon>Euarchontoglires</taxon>
        <taxon>Primates</taxon>
        <taxon>Haplorrhini</taxon>
        <taxon>Catarrhini</taxon>
        <taxon>Hominidae</taxon>
        <taxon>Homo</taxon>
    </lineage>
</organism>
<protein>
    <recommendedName>
        <fullName evidence="12">Probable oxidoreductase PXDNL</fullName>
        <ecNumber evidence="13">1.-.-.-</ecNumber>
    </recommendedName>
    <alternativeName>
        <fullName>Cardiac peroxidase</fullName>
    </alternativeName>
    <alternativeName>
        <fullName evidence="13">Inactive peroxidasin-like protein</fullName>
    </alternativeName>
    <alternativeName>
        <fullName>Polysomal ribonuclease 1</fullName>
        <shortName>PRM1</shortName>
    </alternativeName>
    <alternativeName>
        <fullName>Vascular peroxidase 2</fullName>
    </alternativeName>
</protein>
<accession>A1KZ92</accession>
<accession>B5ME43</accession>
<accession>B6CGZ3</accession>
<accession>H0YBM9</accession>
<accession>Q6ZMR2</accession>
<accession>Q96LH9</accession>
<proteinExistence type="evidence at protein level"/>
<evidence type="ECO:0000250" key="1"/>
<evidence type="ECO:0000255" key="2"/>
<evidence type="ECO:0000255" key="3">
    <source>
        <dbReference type="PROSITE-ProRule" id="PRU00220"/>
    </source>
</evidence>
<evidence type="ECO:0000255" key="4">
    <source>
        <dbReference type="PROSITE-ProRule" id="PRU00298"/>
    </source>
</evidence>
<evidence type="ECO:0000269" key="5">
    <source>
    </source>
</evidence>
<evidence type="ECO:0000269" key="6">
    <source>
    </source>
</evidence>
<evidence type="ECO:0000269" key="7">
    <source>
    </source>
</evidence>
<evidence type="ECO:0000269" key="8">
    <source>
    </source>
</evidence>
<evidence type="ECO:0000269" key="9">
    <source ref="2"/>
</evidence>
<evidence type="ECO:0000269" key="10">
    <source ref="5"/>
</evidence>
<evidence type="ECO:0000303" key="11">
    <source>
    </source>
</evidence>
<evidence type="ECO:0000305" key="12"/>
<evidence type="ECO:0000305" key="13">
    <source>
    </source>
</evidence>
<evidence type="ECO:0000312" key="14">
    <source>
        <dbReference type="HGNC" id="HGNC:26359"/>
    </source>
</evidence>
<name>PXDNL_HUMAN</name>
<keyword id="KW-0025">Alternative splicing</keyword>
<keyword id="KW-0106">Calcium</keyword>
<keyword id="KW-1003">Cell membrane</keyword>
<keyword id="KW-0963">Cytoplasm</keyword>
<keyword id="KW-1015">Disulfide bond</keyword>
<keyword id="KW-0255">Endonuclease</keyword>
<keyword id="KW-0256">Endoplasmic reticulum</keyword>
<keyword id="KW-0325">Glycoprotein</keyword>
<keyword id="KW-0349">Heme</keyword>
<keyword id="KW-0378">Hydrolase</keyword>
<keyword id="KW-0393">Immunoglobulin domain</keyword>
<keyword id="KW-0408">Iron</keyword>
<keyword id="KW-0433">Leucine-rich repeat</keyword>
<keyword id="KW-0472">Membrane</keyword>
<keyword id="KW-0479">Metal-binding</keyword>
<keyword id="KW-0540">Nuclease</keyword>
<keyword id="KW-0560">Oxidoreductase</keyword>
<keyword id="KW-0597">Phosphoprotein</keyword>
<keyword id="KW-1267">Proteomics identification</keyword>
<keyword id="KW-1185">Reference proteome</keyword>
<keyword id="KW-0677">Repeat</keyword>
<keyword id="KW-0964">Secreted</keyword>
<keyword id="KW-0732">Signal</keyword>
<feature type="signal peptide" evidence="2">
    <location>
        <begin position="1"/>
        <end position="23"/>
    </location>
</feature>
<feature type="chain" id="PRO_0000330731" description="Probable oxidoreductase PXDNL">
    <location>
        <begin position="24"/>
        <end position="1463"/>
    </location>
</feature>
<feature type="domain" description="LRRNT">
    <location>
        <begin position="24"/>
        <end position="50"/>
    </location>
</feature>
<feature type="repeat" description="LRR 1">
    <location>
        <begin position="51"/>
        <end position="72"/>
    </location>
</feature>
<feature type="repeat" description="LRR 2">
    <location>
        <begin position="75"/>
        <end position="96"/>
    </location>
</feature>
<feature type="repeat" description="LRR 3">
    <location>
        <begin position="99"/>
        <end position="120"/>
    </location>
</feature>
<feature type="repeat" description="LRR 4">
    <location>
        <begin position="123"/>
        <end position="144"/>
    </location>
</feature>
<feature type="repeat" description="LRR 5">
    <location>
        <begin position="147"/>
        <end position="168"/>
    </location>
</feature>
<feature type="domain" description="LRRCT">
    <location>
        <begin position="180"/>
        <end position="233"/>
    </location>
</feature>
<feature type="domain" description="Ig-like C2-type 1">
    <location>
        <begin position="234"/>
        <end position="322"/>
    </location>
</feature>
<feature type="domain" description="Ig-like C2-type 2">
    <location>
        <begin position="330"/>
        <end position="414"/>
    </location>
</feature>
<feature type="domain" description="Ig-like C2-type 3">
    <location>
        <begin position="419"/>
        <end position="504"/>
    </location>
</feature>
<feature type="domain" description="Ig-like C2-type 4">
    <location>
        <begin position="507"/>
        <end position="596"/>
    </location>
</feature>
<feature type="domain" description="VWFC" evidence="3">
    <location>
        <begin position="1393"/>
        <end position="1451"/>
    </location>
</feature>
<feature type="active site" description="Proton acceptor" evidence="4">
    <location>
        <position position="812"/>
    </location>
</feature>
<feature type="binding site" evidence="4">
    <location>
        <position position="813"/>
    </location>
    <ligand>
        <name>Ca(2+)</name>
        <dbReference type="ChEBI" id="CHEBI:29108"/>
    </ligand>
</feature>
<feature type="binding site" evidence="4">
    <location>
        <position position="891"/>
    </location>
    <ligand>
        <name>Ca(2+)</name>
        <dbReference type="ChEBI" id="CHEBI:29108"/>
    </ligand>
</feature>
<feature type="binding site" evidence="4">
    <location>
        <position position="893"/>
    </location>
    <ligand>
        <name>Ca(2+)</name>
        <dbReference type="ChEBI" id="CHEBI:29108"/>
    </ligand>
</feature>
<feature type="binding site" evidence="4">
    <location>
        <position position="895"/>
    </location>
    <ligand>
        <name>Ca(2+)</name>
        <dbReference type="ChEBI" id="CHEBI:29108"/>
    </ligand>
</feature>
<feature type="binding site" evidence="4">
    <location>
        <position position="897"/>
    </location>
    <ligand>
        <name>Ca(2+)</name>
        <dbReference type="ChEBI" id="CHEBI:29108"/>
    </ligand>
</feature>
<feature type="binding site" description="axial binding residue" evidence="4">
    <location>
        <position position="1057"/>
    </location>
    <ligand>
        <name>heme b</name>
        <dbReference type="ChEBI" id="CHEBI:60344"/>
    </ligand>
    <ligandPart>
        <name>Fe</name>
        <dbReference type="ChEBI" id="CHEBI:18248"/>
    </ligandPart>
</feature>
<feature type="site" description="Transition state stabilizer" evidence="4">
    <location>
        <position position="960"/>
    </location>
</feature>
<feature type="glycosylation site" description="N-linked (GlcNAc...) asparagine" evidence="2">
    <location>
        <position position="387"/>
    </location>
</feature>
<feature type="disulfide bond" evidence="1">
    <location>
        <begin position="255"/>
        <end position="305"/>
    </location>
</feature>
<feature type="disulfide bond" evidence="1">
    <location>
        <begin position="351"/>
        <end position="398"/>
    </location>
</feature>
<feature type="disulfide bond" evidence="1">
    <location>
        <begin position="440"/>
        <end position="488"/>
    </location>
</feature>
<feature type="disulfide bond" evidence="1">
    <location>
        <begin position="532"/>
        <end position="580"/>
    </location>
</feature>
<feature type="disulfide bond" evidence="1">
    <location>
        <begin position="718"/>
        <end position="734"/>
    </location>
</feature>
<feature type="disulfide bond" evidence="1">
    <location>
        <begin position="832"/>
        <end position="842"/>
    </location>
</feature>
<feature type="disulfide bond" evidence="1">
    <location>
        <begin position="836"/>
        <end position="859"/>
    </location>
</feature>
<feature type="disulfide bond" evidence="1">
    <location>
        <begin position="944"/>
        <end position="953"/>
    </location>
</feature>
<feature type="disulfide bond" evidence="1">
    <location>
        <begin position="1160"/>
        <end position="1217"/>
    </location>
</feature>
<feature type="disulfide bond" evidence="1">
    <location>
        <begin position="1258"/>
        <end position="1284"/>
    </location>
</feature>
<feature type="splice variant" id="VSP_044240" description="In isoform PMR1." evidence="12">
    <location>
        <begin position="1"/>
        <end position="801"/>
    </location>
</feature>
<feature type="splice variant" id="VSP_044241" description="In isoform PMR1." evidence="12">
    <original>CRSRGQFRAVTQESQKKRSAQYSYPVDKDMELSHLRSRQQDKIYVGEDARNVTVLAKTKFSQDFSTFAAEIQETITALREQINKLEARLRQAGCTDVRGVPRKAEERWMKEDCTHCICESGQVTCVVEICPPAPCPSPELVKGTCCPVCRDRGMPSDSPEKR</original>
    <variation>KQAGGTPEAGRVYRC</variation>
    <location>
        <begin position="1302"/>
        <end position="1463"/>
    </location>
</feature>
<feature type="splice variant" id="VSP_033070" description="In isoform 2." evidence="11">
    <original>CRSRGQFRAVTQESQ</original>
    <variation>KQAGGTPEAGRVYRC</variation>
    <location>
        <begin position="1302"/>
        <end position="1316"/>
    </location>
</feature>
<feature type="splice variant" id="VSP_033071" description="In isoform 2." evidence="11">
    <location>
        <begin position="1317"/>
        <end position="1463"/>
    </location>
</feature>
<feature type="sequence variant" id="VAR_050488" description="In dbSNP:rs7833909.">
    <original>I</original>
    <variation>T</variation>
    <location>
        <position position="343"/>
    </location>
</feature>
<feature type="sequence variant" id="VAR_050489" description="In dbSNP:rs16916235.">
    <original>R</original>
    <variation>Q</variation>
    <location>
        <position position="583"/>
    </location>
</feature>
<feature type="sequence variant" id="VAR_050490" description="In dbSNP:rs16916207.">
    <original>D</original>
    <variation>A</variation>
    <location>
        <position position="616"/>
    </location>
</feature>
<feature type="sequence variant" id="VAR_050491" description="In dbSNP:rs2977020." evidence="5 6 9 10">
    <original>M</original>
    <variation>V</variation>
    <location>
        <position position="981"/>
    </location>
</feature>
<feature type="sequence variant" id="VAR_050492" description="In dbSNP:rs11774588.">
    <original>V</original>
    <variation>D</variation>
    <location>
        <position position="1327"/>
    </location>
</feature>
<feature type="sequence variant" id="VAR_050493" description="In dbSNP:rs7827446." evidence="9">
    <original>R</original>
    <variation>K</variation>
    <location>
        <position position="1399"/>
    </location>
</feature>
<feature type="sequence variant" id="VAR_050494" description="In dbSNP:rs1052704." evidence="9">
    <original>D</original>
    <variation>E</variation>
    <location>
        <position position="1452"/>
    </location>
</feature>
<feature type="sequence conflict" description="In Ref. 4; BAD18663." evidence="12" ref="4">
    <original>R</original>
    <variation>G</variation>
    <location>
        <position position="781"/>
    </location>
</feature>
<feature type="sequence conflict" description="In Ref. 4; BAD18663." evidence="12" ref="4">
    <original>S</original>
    <variation>N</variation>
    <location>
        <position position="833"/>
    </location>
</feature>
<comment type="function">
    <text evidence="8 13">Probable oxidoreductase (Probable). Lacks peroxidase activity (PubMed:24253521). Inhibits the peroxidase activity of PXDN through its interaction (PubMed:24253521).</text>
</comment>
<comment type="function">
    <molecule>Isoform PMR1</molecule>
    <text evidence="7">Endonuclease selectively degrading some target mRNAs while they are engaged by translating ribosomes, among which albumin and beta-globin mRNAs.</text>
</comment>
<comment type="cofactor">
    <cofactor evidence="4">
        <name>heme b</name>
        <dbReference type="ChEBI" id="CHEBI:60344"/>
    </cofactor>
</comment>
<comment type="subunit">
    <text evidence="8">Interacts with PXDN; this interaction inhibits the peroxidase activity of PXDN.</text>
</comment>
<comment type="subcellular location">
    <subcellularLocation>
        <location evidence="8">Secreted</location>
    </subcellularLocation>
    <subcellularLocation>
        <location evidence="8">Endoplasmic reticulum</location>
    </subcellularLocation>
    <subcellularLocation>
        <location evidence="8">Cell membrane</location>
    </subcellularLocation>
</comment>
<comment type="subcellular location">
    <molecule>Isoform PMR1</molecule>
    <subcellularLocation>
        <location>Cytoplasm</location>
    </subcellularLocation>
    <text>Associates with polysomes.</text>
</comment>
<comment type="alternative products">
    <event type="alternative splicing"/>
    <isoform>
        <id>A1KZ92-1</id>
        <name>1</name>
        <sequence type="displayed"/>
    </isoform>
    <isoform>
        <id>A1KZ92-2</id>
        <name>2</name>
        <sequence type="described" ref="VSP_033070 VSP_033071"/>
    </isoform>
    <isoform>
        <id>A1KZ92-3</id>
        <name>PMR1</name>
        <sequence type="described" ref="VSP_044240 VSP_044241"/>
    </isoform>
</comment>
<comment type="tissue specificity">
    <text evidence="7 8">The 57 kDa isoform PMR1 is the only form detected at protein levels in human cell lines (PubMed:22543864). Expressed in heart (PubMed:24253521).</text>
</comment>
<comment type="induction">
    <text evidence="8">Increased by Angiotensin-2.</text>
</comment>
<comment type="PTM">
    <text evidence="7">Phosphorylation by SRC on tyrosine residues is required for targeting to polysomes.</text>
</comment>
<comment type="similarity">
    <text evidence="4">Belongs to the peroxidase family. XPO subfamily.</text>
</comment>
<comment type="sequence caution" evidence="12">
    <conflict type="frameshift">
        <sequence resource="EMBL-CDS" id="AAX70929"/>
    </conflict>
</comment>
<comment type="sequence caution" evidence="12">
    <conflict type="erroneous initiation">
        <sequence resource="EMBL-CDS" id="BAB71713"/>
    </conflict>
    <text>Truncated N-terminus.</text>
</comment>
<comment type="sequence caution" evidence="12">
    <conflict type="erroneous initiation">
        <sequence resource="EMBL-CDS" id="BAD18663"/>
    </conflict>
    <text>Truncated N-terminus.</text>
</comment>
<comment type="sequence caution" evidence="12">
    <conflict type="erroneous gene model prediction">
        <sequence resource="EMBL-CDS" id="EAW86707"/>
    </conflict>
</comment>